<reference key="1">
    <citation type="journal article" date="1997" name="Nature">
        <title>The nucleotide sequence of Saccharomyces cerevisiae chromosome VII.</title>
        <authorList>
            <person name="Tettelin H."/>
            <person name="Agostoni-Carbone M.L."/>
            <person name="Albermann K."/>
            <person name="Albers M."/>
            <person name="Arroyo J."/>
            <person name="Backes U."/>
            <person name="Barreiros T."/>
            <person name="Bertani I."/>
            <person name="Bjourson A.J."/>
            <person name="Brueckner M."/>
            <person name="Bruschi C.V."/>
            <person name="Carignani G."/>
            <person name="Castagnoli L."/>
            <person name="Cerdan E."/>
            <person name="Clemente M.L."/>
            <person name="Coblenz A."/>
            <person name="Coglievina M."/>
            <person name="Coissac E."/>
            <person name="Defoor E."/>
            <person name="Del Bino S."/>
            <person name="Delius H."/>
            <person name="Delneri D."/>
            <person name="de Wergifosse P."/>
            <person name="Dujon B."/>
            <person name="Durand P."/>
            <person name="Entian K.-D."/>
            <person name="Eraso P."/>
            <person name="Escribano V."/>
            <person name="Fabiani L."/>
            <person name="Fartmann B."/>
            <person name="Feroli F."/>
            <person name="Feuermann M."/>
            <person name="Frontali L."/>
            <person name="Garcia-Gonzalez M."/>
            <person name="Garcia-Saez M.I."/>
            <person name="Goffeau A."/>
            <person name="Guerreiro P."/>
            <person name="Hani J."/>
            <person name="Hansen M."/>
            <person name="Hebling U."/>
            <person name="Hernandez K."/>
            <person name="Heumann K."/>
            <person name="Hilger F."/>
            <person name="Hofmann B."/>
            <person name="Indge K.J."/>
            <person name="James C.M."/>
            <person name="Klima R."/>
            <person name="Koetter P."/>
            <person name="Kramer B."/>
            <person name="Kramer W."/>
            <person name="Lauquin G."/>
            <person name="Leuther H."/>
            <person name="Louis E.J."/>
            <person name="Maillier E."/>
            <person name="Marconi A."/>
            <person name="Martegani E."/>
            <person name="Mazon M.J."/>
            <person name="Mazzoni C."/>
            <person name="McReynolds A.D.K."/>
            <person name="Melchioretto P."/>
            <person name="Mewes H.-W."/>
            <person name="Minenkova O."/>
            <person name="Mueller-Auer S."/>
            <person name="Nawrocki A."/>
            <person name="Netter P."/>
            <person name="Neu R."/>
            <person name="Nombela C."/>
            <person name="Oliver S.G."/>
            <person name="Panzeri L."/>
            <person name="Paoluzi S."/>
            <person name="Plevani P."/>
            <person name="Portetelle D."/>
            <person name="Portillo F."/>
            <person name="Potier S."/>
            <person name="Purnelle B."/>
            <person name="Rieger M."/>
            <person name="Riles L."/>
            <person name="Rinaldi T."/>
            <person name="Robben J."/>
            <person name="Rodrigues-Pousada C."/>
            <person name="Rodriguez-Belmonte E."/>
            <person name="Rodriguez-Torres A.M."/>
            <person name="Rose M."/>
            <person name="Ruzzi M."/>
            <person name="Saliola M."/>
            <person name="Sanchez-Perez M."/>
            <person name="Schaefer B."/>
            <person name="Schaefer M."/>
            <person name="Scharfe M."/>
            <person name="Schmidheini T."/>
            <person name="Schreer A."/>
            <person name="Skala J."/>
            <person name="Souciet J.-L."/>
            <person name="Steensma H.Y."/>
            <person name="Talla E."/>
            <person name="Thierry A."/>
            <person name="Vandenbol M."/>
            <person name="van der Aart Q.J.M."/>
            <person name="Van Dyck L."/>
            <person name="Vanoni M."/>
            <person name="Verhasselt P."/>
            <person name="Voet M."/>
            <person name="Volckaert G."/>
            <person name="Wambutt R."/>
            <person name="Watson M.D."/>
            <person name="Weber N."/>
            <person name="Wedler E."/>
            <person name="Wedler H."/>
            <person name="Wipfli P."/>
            <person name="Wolf K."/>
            <person name="Wright L.F."/>
            <person name="Zaccaria P."/>
            <person name="Zimmermann M."/>
            <person name="Zollner A."/>
            <person name="Kleine K."/>
        </authorList>
    </citation>
    <scope>NUCLEOTIDE SEQUENCE [LARGE SCALE GENOMIC DNA]</scope>
    <source>
        <strain>ATCC 204508 / S288c</strain>
    </source>
</reference>
<reference key="2">
    <citation type="journal article" date="2014" name="G3 (Bethesda)">
        <title>The reference genome sequence of Saccharomyces cerevisiae: Then and now.</title>
        <authorList>
            <person name="Engel S.R."/>
            <person name="Dietrich F.S."/>
            <person name="Fisk D.G."/>
            <person name="Binkley G."/>
            <person name="Balakrishnan R."/>
            <person name="Costanzo M.C."/>
            <person name="Dwight S.S."/>
            <person name="Hitz B.C."/>
            <person name="Karra K."/>
            <person name="Nash R.S."/>
            <person name="Weng S."/>
            <person name="Wong E.D."/>
            <person name="Lloyd P."/>
            <person name="Skrzypek M.S."/>
            <person name="Miyasato S.R."/>
            <person name="Simison M."/>
            <person name="Cherry J.M."/>
        </authorList>
    </citation>
    <scope>GENOME REANNOTATION</scope>
    <source>
        <strain>ATCC 204508 / S288c</strain>
    </source>
</reference>
<reference key="3">
    <citation type="journal article" date="2002" name="Nature">
        <title>A large nucleolar U3 ribonucleoprotein required for 18S ribosomal RNA biogenesis.</title>
        <authorList>
            <person name="Dragon F."/>
            <person name="Gallagher J.E.G."/>
            <person name="Compagnone-Post P.A."/>
            <person name="Mitchell B.M."/>
            <person name="Porwancher K.A."/>
            <person name="Wehner K.A."/>
            <person name="Wormsley S."/>
            <person name="Settlage R.E."/>
            <person name="Shabanowitz J."/>
            <person name="Osheim Y."/>
            <person name="Beyer A.L."/>
            <person name="Hunt D.F."/>
            <person name="Baserga S.J."/>
        </authorList>
    </citation>
    <scope>FUNCTION</scope>
    <scope>INTERACTION WITH MPP10 AND SNORNA U3</scope>
    <scope>IDENTIFICATION IN SSU PROCESSOME BY MASS SPECTROMETRY</scope>
    <scope>SUBCELLULAR LOCATION</scope>
</reference>
<reference key="4">
    <citation type="journal article" date="2003" name="J. Biol. Chem.">
        <title>Utp8p is an essential intranuclear component of the nuclear tRNA export machinery of Saccharomyces cerevisiae.</title>
        <authorList>
            <person name="Steiner-Mosonyi M."/>
            <person name="Leslie D.M."/>
            <person name="Dehghani H."/>
            <person name="Aitchison J.D."/>
            <person name="Mangroo D."/>
        </authorList>
    </citation>
    <scope>FUNCTION</scope>
    <scope>SUBCELLULAR LOCATION</scope>
</reference>
<reference key="5">
    <citation type="journal article" date="2003" name="Nature">
        <title>Global analysis of protein expression in yeast.</title>
        <authorList>
            <person name="Ghaemmaghami S."/>
            <person name="Huh W.-K."/>
            <person name="Bower K."/>
            <person name="Howson R.W."/>
            <person name="Belle A."/>
            <person name="Dephoure N."/>
            <person name="O'Shea E.K."/>
            <person name="Weissman J.S."/>
        </authorList>
    </citation>
    <scope>LEVEL OF PROTEIN EXPRESSION [LARGE SCALE ANALYSIS]</scope>
</reference>
<reference key="6">
    <citation type="journal article" date="2004" name="Genes Dev.">
        <title>RNA polymerase I transcription and pre-rRNA processing are linked by specific SSU processome components.</title>
        <authorList>
            <person name="Gallagher J.E.G."/>
            <person name="Dunbar D.A."/>
            <person name="Granneman S."/>
            <person name="Mitchell B.M."/>
            <person name="Osheim Y."/>
            <person name="Beyer A.L."/>
            <person name="Baserga S.J."/>
        </authorList>
    </citation>
    <scope>FUNCTION</scope>
    <scope>IDENTIFICATION IN COMPLEX WITH OTHER T-UTPS</scope>
    <scope>SUBCELLULAR LOCATION</scope>
</reference>
<reference key="7">
    <citation type="journal article" date="2007" name="J. Proteome Res.">
        <title>Large-scale phosphorylation analysis of alpha-factor-arrested Saccharomyces cerevisiae.</title>
        <authorList>
            <person name="Li X."/>
            <person name="Gerber S.A."/>
            <person name="Rudner A.D."/>
            <person name="Beausoleil S.A."/>
            <person name="Haas W."/>
            <person name="Villen J."/>
            <person name="Elias J.E."/>
            <person name="Gygi S.P."/>
        </authorList>
    </citation>
    <scope>IDENTIFICATION BY MASS SPECTROMETRY [LARGE SCALE ANALYSIS]</scope>
    <source>
        <strain>ADR376</strain>
    </source>
</reference>
<reference key="8">
    <citation type="journal article" date="2008" name="Mol. Cell. Proteomics">
        <title>A multidimensional chromatography technology for in-depth phosphoproteome analysis.</title>
        <authorList>
            <person name="Albuquerque C.P."/>
            <person name="Smolka M.B."/>
            <person name="Payne S.H."/>
            <person name="Bafna V."/>
            <person name="Eng J."/>
            <person name="Zhou H."/>
        </authorList>
    </citation>
    <scope>PHOSPHORYLATION [LARGE SCALE ANALYSIS] AT SER-148</scope>
    <scope>IDENTIFICATION BY MASS SPECTROMETRY [LARGE SCALE ANALYSIS]</scope>
</reference>
<reference key="9">
    <citation type="journal article" date="2009" name="Science">
        <title>Global analysis of Cdk1 substrate phosphorylation sites provides insights into evolution.</title>
        <authorList>
            <person name="Holt L.J."/>
            <person name="Tuch B.B."/>
            <person name="Villen J."/>
            <person name="Johnson A.D."/>
            <person name="Gygi S.P."/>
            <person name="Morgan D.O."/>
        </authorList>
    </citation>
    <scope>PHOSPHORYLATION [LARGE SCALE ANALYSIS] AT THR-95 AND SER-150</scope>
    <scope>IDENTIFICATION BY MASS SPECTROMETRY [LARGE SCALE ANALYSIS]</scope>
</reference>
<reference key="10">
    <citation type="journal article" date="2010" name="RNA">
        <title>The DEAD-box RNA helicase-like Utp25 is an SSU processome component.</title>
        <authorList>
            <person name="Charette J.M."/>
            <person name="Baserga S.J."/>
        </authorList>
    </citation>
    <scope>INTERACTION WITH UTP25</scope>
</reference>
<accession>P53276</accession>
<accession>D6VUR0</accession>
<comment type="function">
    <text evidence="1 2 4">Involved in nucleolar processing of pre-18S ribosomal RNA. Also has a role in nuclear tRNA export. It acts between the steps of tRNA maturation/aminoacylation and its subsequent translocation out of the nucleus. Required for optimal pre-ribosomal RNA transcription by RNA polymerase I together with a subset of U3 proteins required for transcription (t-UTPs).</text>
</comment>
<comment type="subunit">
    <text evidence="1 4 5">Interacts with snoRNA U3. Interacts with MPP10 and UTP25. Component of the ribosomal small subunit (SSU) processome composed of at least 40 protein subunits and snoRNA U3. In the absence of snoRNA3, forms a complex with other t-UTPs. This complex can associate with pre-18S ribosomal RNAs.</text>
</comment>
<comment type="interaction">
    <interactant intactId="EBI-23301">
        <id>P53276</id>
    </interactant>
    <interactant intactId="EBI-11168">
        <id>P47083</id>
        <label>MPP10</label>
    </interactant>
    <organismsDiffer>false</organismsDiffer>
    <experiments>6</experiments>
</comment>
<comment type="interaction">
    <interactant intactId="EBI-23301">
        <id>P53276</id>
    </interactant>
    <interactant intactId="EBI-37773">
        <id>Q02931</id>
        <label>NAN1</label>
    </interactant>
    <organismsDiffer>false</organismsDiffer>
    <experiments>6</experiments>
</comment>
<comment type="interaction">
    <interactant intactId="EBI-23301">
        <id>P53276</id>
    </interactant>
    <interactant intactId="EBI-1884">
        <id>P42945</id>
        <label>UTP10</label>
    </interactant>
    <organismsDiffer>false</organismsDiffer>
    <experiments>5</experiments>
</comment>
<comment type="interaction">
    <interactant intactId="EBI-23301">
        <id>P53276</id>
    </interactant>
    <interactant intactId="EBI-28183">
        <id>Q04305</id>
        <label>UTP15</label>
    </interactant>
    <organismsDiffer>false</organismsDiffer>
    <experiments>10</experiments>
</comment>
<comment type="interaction">
    <interactant intactId="EBI-23301">
        <id>P53276</id>
    </interactant>
    <interactant intactId="EBI-35712">
        <id>Q06679</id>
        <label>UTP4</label>
    </interactant>
    <organismsDiffer>false</organismsDiffer>
    <experiments>7</experiments>
</comment>
<comment type="interaction">
    <interactant intactId="EBI-23301">
        <id>P53276</id>
    </interactant>
    <interactant intactId="EBI-35844">
        <id>Q04177</id>
        <label>UTP5</label>
    </interactant>
    <organismsDiffer>false</organismsDiffer>
    <experiments>3</experiments>
</comment>
<comment type="interaction">
    <interactant intactId="EBI-23301">
        <id>P53276</id>
    </interactant>
    <interactant intactId="EBI-24892">
        <id>P38882</id>
        <label>UTP9</label>
    </interactant>
    <organismsDiffer>false</organismsDiffer>
    <experiments>7</experiments>
</comment>
<comment type="subcellular location">
    <subcellularLocation>
        <location evidence="1 2 4">Nucleus</location>
        <location evidence="1 2 4">Nucleolus</location>
    </subcellularLocation>
    <text>Associated with ribosomal chromatin, even in the absence of transcription.</text>
</comment>
<comment type="miscellaneous">
    <text evidence="3">Present with 16800 molecules/cell in log phase SD medium.</text>
</comment>
<protein>
    <recommendedName>
        <fullName>U3 small nucleolar RNA-associated protein 8</fullName>
        <shortName>U3 snoRNA-associated protein 8</shortName>
    </recommendedName>
    <alternativeName>
        <fullName>U three protein 8</fullName>
    </alternativeName>
    <alternativeName>
        <fullName>U3 protein 8 required for transcription</fullName>
    </alternativeName>
    <alternativeName>
        <fullName>t-UTP8</fullName>
    </alternativeName>
</protein>
<evidence type="ECO:0000269" key="1">
    <source>
    </source>
</evidence>
<evidence type="ECO:0000269" key="2">
    <source>
    </source>
</evidence>
<evidence type="ECO:0000269" key="3">
    <source>
    </source>
</evidence>
<evidence type="ECO:0000269" key="4">
    <source>
    </source>
</evidence>
<evidence type="ECO:0000269" key="5">
    <source>
    </source>
</evidence>
<evidence type="ECO:0007744" key="6">
    <source>
    </source>
</evidence>
<evidence type="ECO:0007744" key="7">
    <source>
    </source>
</evidence>
<dbReference type="EMBL" id="Z72913">
    <property type="protein sequence ID" value="CAA97140.1"/>
    <property type="molecule type" value="Genomic_DNA"/>
</dbReference>
<dbReference type="EMBL" id="BK006941">
    <property type="protein sequence ID" value="DAA08221.1"/>
    <property type="molecule type" value="Genomic_DNA"/>
</dbReference>
<dbReference type="PIR" id="S64437">
    <property type="entry name" value="S64437"/>
</dbReference>
<dbReference type="RefSeq" id="NP_011644.3">
    <property type="nucleotide sequence ID" value="NM_001181257.3"/>
</dbReference>
<dbReference type="PDB" id="5WLC">
    <property type="method" value="EM"/>
    <property type="resolution" value="3.80 A"/>
    <property type="chains" value="LI=549-713"/>
</dbReference>
<dbReference type="PDB" id="6KE6">
    <property type="method" value="EM"/>
    <property type="resolution" value="3.40 A"/>
    <property type="chains" value="A8=1-713"/>
</dbReference>
<dbReference type="PDB" id="6LQP">
    <property type="method" value="EM"/>
    <property type="resolution" value="3.20 A"/>
    <property type="chains" value="A8=1-713"/>
</dbReference>
<dbReference type="PDB" id="6LQQ">
    <property type="method" value="EM"/>
    <property type="resolution" value="4.10 A"/>
    <property type="chains" value="A8=1-713"/>
</dbReference>
<dbReference type="PDB" id="6LQR">
    <property type="method" value="EM"/>
    <property type="resolution" value="8.60 A"/>
    <property type="chains" value="A8=1-713"/>
</dbReference>
<dbReference type="PDB" id="6LQS">
    <property type="method" value="EM"/>
    <property type="resolution" value="3.80 A"/>
    <property type="chains" value="A8=1-713"/>
</dbReference>
<dbReference type="PDB" id="6LQU">
    <property type="method" value="EM"/>
    <property type="resolution" value="3.70 A"/>
    <property type="chains" value="A8=1-713"/>
</dbReference>
<dbReference type="PDB" id="6LQV">
    <property type="method" value="EM"/>
    <property type="resolution" value="4.80 A"/>
    <property type="chains" value="A8=1-713"/>
</dbReference>
<dbReference type="PDB" id="6ND4">
    <property type="method" value="EM"/>
    <property type="resolution" value="4.30 A"/>
    <property type="chains" value="I=549-713"/>
</dbReference>
<dbReference type="PDB" id="6ZQA">
    <property type="method" value="EM"/>
    <property type="resolution" value="4.40 A"/>
    <property type="chains" value="UH=1-713"/>
</dbReference>
<dbReference type="PDB" id="6ZQB">
    <property type="method" value="EM"/>
    <property type="resolution" value="3.90 A"/>
    <property type="chains" value="UH=1-713"/>
</dbReference>
<dbReference type="PDB" id="6ZQC">
    <property type="method" value="EM"/>
    <property type="resolution" value="3.80 A"/>
    <property type="chains" value="UH=1-713"/>
</dbReference>
<dbReference type="PDB" id="6ZQD">
    <property type="method" value="EM"/>
    <property type="resolution" value="3.80 A"/>
    <property type="chains" value="UH=1-713"/>
</dbReference>
<dbReference type="PDB" id="6ZQE">
    <property type="method" value="EM"/>
    <property type="resolution" value="7.10 A"/>
    <property type="chains" value="UH=1-713"/>
</dbReference>
<dbReference type="PDB" id="7AJT">
    <property type="method" value="EM"/>
    <property type="resolution" value="4.60 A"/>
    <property type="chains" value="UH=1-713"/>
</dbReference>
<dbReference type="PDB" id="7AJU">
    <property type="method" value="EM"/>
    <property type="resolution" value="3.80 A"/>
    <property type="chains" value="UH=1-713"/>
</dbReference>
<dbReference type="PDB" id="7D4I">
    <property type="method" value="EM"/>
    <property type="resolution" value="4.00 A"/>
    <property type="chains" value="A8=1-713"/>
</dbReference>
<dbReference type="PDB" id="7D5S">
    <property type="method" value="EM"/>
    <property type="resolution" value="4.60 A"/>
    <property type="chains" value="A8=1-713"/>
</dbReference>
<dbReference type="PDB" id="7D63">
    <property type="method" value="EM"/>
    <property type="resolution" value="12.30 A"/>
    <property type="chains" value="A8=1-713"/>
</dbReference>
<dbReference type="PDB" id="7SUK">
    <property type="method" value="EM"/>
    <property type="resolution" value="3.99 A"/>
    <property type="chains" value="LI=27-713"/>
</dbReference>
<dbReference type="PDBsum" id="5WLC"/>
<dbReference type="PDBsum" id="6KE6"/>
<dbReference type="PDBsum" id="6LQP"/>
<dbReference type="PDBsum" id="6LQQ"/>
<dbReference type="PDBsum" id="6LQR"/>
<dbReference type="PDBsum" id="6LQS"/>
<dbReference type="PDBsum" id="6LQU"/>
<dbReference type="PDBsum" id="6LQV"/>
<dbReference type="PDBsum" id="6ND4"/>
<dbReference type="PDBsum" id="6ZQA"/>
<dbReference type="PDBsum" id="6ZQB"/>
<dbReference type="PDBsum" id="6ZQC"/>
<dbReference type="PDBsum" id="6ZQD"/>
<dbReference type="PDBsum" id="6ZQE"/>
<dbReference type="PDBsum" id="7AJT"/>
<dbReference type="PDBsum" id="7AJU"/>
<dbReference type="PDBsum" id="7D4I"/>
<dbReference type="PDBsum" id="7D5S"/>
<dbReference type="PDBsum" id="7D63"/>
<dbReference type="PDBsum" id="7SUK"/>
<dbReference type="EMDB" id="EMD-0441"/>
<dbReference type="EMDB" id="EMD-0949"/>
<dbReference type="EMDB" id="EMD-0950"/>
<dbReference type="EMDB" id="EMD-0951"/>
<dbReference type="EMDB" id="EMD-0952"/>
<dbReference type="EMDB" id="EMD-0954"/>
<dbReference type="EMDB" id="EMD-0955"/>
<dbReference type="EMDB" id="EMD-11357"/>
<dbReference type="EMDB" id="EMD-11358"/>
<dbReference type="EMDB" id="EMD-11359"/>
<dbReference type="EMDB" id="EMD-11360"/>
<dbReference type="EMDB" id="EMD-11361"/>
<dbReference type="EMDB" id="EMD-11807"/>
<dbReference type="EMDB" id="EMD-11808"/>
<dbReference type="EMDB" id="EMD-25441"/>
<dbReference type="EMDB" id="EMD-30574"/>
<dbReference type="EMDB" id="EMD-30584"/>
<dbReference type="EMDB" id="EMD-30588"/>
<dbReference type="EMDB" id="EMD-8859"/>
<dbReference type="EMDB" id="EMD-9964"/>
<dbReference type="SMR" id="P53276"/>
<dbReference type="BioGRID" id="33376">
    <property type="interactions" value="426"/>
</dbReference>
<dbReference type="ComplexPortal" id="CPX-1409">
    <property type="entry name" value="UTP-A complex"/>
</dbReference>
<dbReference type="DIP" id="DIP-6747N"/>
<dbReference type="FunCoup" id="P53276">
    <property type="interactions" value="383"/>
</dbReference>
<dbReference type="IntAct" id="P53276">
    <property type="interactions" value="88"/>
</dbReference>
<dbReference type="MINT" id="P53276"/>
<dbReference type="STRING" id="4932.YGR128C"/>
<dbReference type="TCDB" id="9.A.50.1.1">
    <property type="family name" value="the nuclear t-rna exporter (trna-e) family"/>
</dbReference>
<dbReference type="iPTMnet" id="P53276"/>
<dbReference type="PaxDb" id="4932-YGR128C"/>
<dbReference type="PeptideAtlas" id="P53276"/>
<dbReference type="EnsemblFungi" id="YGR128C_mRNA">
    <property type="protein sequence ID" value="YGR128C"/>
    <property type="gene ID" value="YGR128C"/>
</dbReference>
<dbReference type="GeneID" id="853029"/>
<dbReference type="KEGG" id="sce:YGR128C"/>
<dbReference type="AGR" id="SGD:S000003360"/>
<dbReference type="SGD" id="S000003360">
    <property type="gene designation" value="UTP8"/>
</dbReference>
<dbReference type="VEuPathDB" id="FungiDB:YGR128C"/>
<dbReference type="eggNOG" id="ENOG502QQ4S">
    <property type="taxonomic scope" value="Eukaryota"/>
</dbReference>
<dbReference type="HOGENOM" id="CLU_024075_0_0_1"/>
<dbReference type="InParanoid" id="P53276"/>
<dbReference type="OMA" id="IVTCPNL"/>
<dbReference type="OrthoDB" id="4055624at2759"/>
<dbReference type="BioCyc" id="YEAST:G3O-30834-MONOMER"/>
<dbReference type="BioGRID-ORCS" id="853029">
    <property type="hits" value="3 hits in 10 CRISPR screens"/>
</dbReference>
<dbReference type="PRO" id="PR:P53276"/>
<dbReference type="Proteomes" id="UP000002311">
    <property type="component" value="Chromosome VII"/>
</dbReference>
<dbReference type="RNAct" id="P53276">
    <property type="molecule type" value="protein"/>
</dbReference>
<dbReference type="GO" id="GO:0030686">
    <property type="term" value="C:90S preribosome"/>
    <property type="evidence" value="ECO:0007005"/>
    <property type="project" value="SGD"/>
</dbReference>
<dbReference type="GO" id="GO:0005730">
    <property type="term" value="C:nucleolus"/>
    <property type="evidence" value="ECO:0000314"/>
    <property type="project" value="SGD"/>
</dbReference>
<dbReference type="GO" id="GO:0033553">
    <property type="term" value="C:rDNA heterochromatin"/>
    <property type="evidence" value="ECO:0000314"/>
    <property type="project" value="SGD"/>
</dbReference>
<dbReference type="GO" id="GO:0032040">
    <property type="term" value="C:small-subunit processome"/>
    <property type="evidence" value="ECO:0000314"/>
    <property type="project" value="SGD"/>
</dbReference>
<dbReference type="GO" id="GO:0034455">
    <property type="term" value="C:t-UTP complex"/>
    <property type="evidence" value="ECO:0000314"/>
    <property type="project" value="SGD"/>
</dbReference>
<dbReference type="GO" id="GO:0000049">
    <property type="term" value="F:tRNA binding"/>
    <property type="evidence" value="ECO:0000314"/>
    <property type="project" value="SGD"/>
</dbReference>
<dbReference type="GO" id="GO:0034511">
    <property type="term" value="F:U3 snoRNA binding"/>
    <property type="evidence" value="ECO:0000314"/>
    <property type="project" value="SGD"/>
</dbReference>
<dbReference type="GO" id="GO:0030490">
    <property type="term" value="P:maturation of SSU-rRNA"/>
    <property type="evidence" value="ECO:0000303"/>
    <property type="project" value="ComplexPortal"/>
</dbReference>
<dbReference type="GO" id="GO:0000462">
    <property type="term" value="P:maturation of SSU-rRNA from tricistronic rRNA transcript (SSU-rRNA, 5.8S rRNA, LSU-rRNA)"/>
    <property type="evidence" value="ECO:0000315"/>
    <property type="project" value="SGD"/>
</dbReference>
<dbReference type="GO" id="GO:0045943">
    <property type="term" value="P:positive regulation of transcription by RNA polymerase I"/>
    <property type="evidence" value="ECO:0000315"/>
    <property type="project" value="SGD"/>
</dbReference>
<dbReference type="GO" id="GO:0006409">
    <property type="term" value="P:tRNA export from nucleus"/>
    <property type="evidence" value="ECO:0000315"/>
    <property type="project" value="SGD"/>
</dbReference>
<dbReference type="InterPro" id="IPR018843">
    <property type="entry name" value="Utp8_b-prop"/>
</dbReference>
<dbReference type="InterPro" id="IPR053881">
    <property type="entry name" value="Utp8_C"/>
</dbReference>
<dbReference type="Pfam" id="PF10395">
    <property type="entry name" value="Utp8_b_propeller"/>
    <property type="match status" value="1"/>
</dbReference>
<dbReference type="Pfam" id="PF22542">
    <property type="entry name" value="Utp8_C"/>
    <property type="match status" value="1"/>
</dbReference>
<organism>
    <name type="scientific">Saccharomyces cerevisiae (strain ATCC 204508 / S288c)</name>
    <name type="common">Baker's yeast</name>
    <dbReference type="NCBI Taxonomy" id="559292"/>
    <lineage>
        <taxon>Eukaryota</taxon>
        <taxon>Fungi</taxon>
        <taxon>Dikarya</taxon>
        <taxon>Ascomycota</taxon>
        <taxon>Saccharomycotina</taxon>
        <taxon>Saccharomycetes</taxon>
        <taxon>Saccharomycetales</taxon>
        <taxon>Saccharomycetaceae</taxon>
        <taxon>Saccharomyces</taxon>
    </lineage>
</organism>
<sequence>MPSLSQPFRLATLPKIASLSNFSLQADYVQVADGTFNESTNNITLGISGSSISQYIINPTPKLTFDYPIPSTNIITACNAEKGQANIDGNIEASTDDEANNEKTINTQKKRNVEIWAFGLMVNKGNYTLNVITKALEDTTDTSNDHLSESDIDNKAYTGSDEFLSQYKIKAKAKVMSIKIDTKNSLVIAILQNGLIEIFDFKLTLLHSFDISYDNLKYAKWFTENGTEYVFVLCPLQDDKVCYKLLELTDCGSGESSPIKELSSTIIEGFSFENSKLCYQFGKLYKLNQGKIYIYSLPHCQLQQVIEFPMVDKLSPGDDLISFQPVSVNRVLLTVNNVIYLLDLLHCSTLSQRELTHVKTFQLLKSAVINSEKSHNSKTIAIGISTKNGPNPTSSLEIINIDVGTNTLKDSLGKSFQVGNNDSSVILKPLFDDKDINDKRVKCNDVSGDSSVPVLHCNEVIEKLSALQDNDITSFDDIFFKELKIKEEHYTEKDRYISDPGFLNKVLDLIFGKFSGNDYPKTLTFLLTHPLFPLSRTRNLLSLLRDQPRLFKQAIVTCPNLPLNELLEELFSIRNRELLLDISFRILQDFTRDSIKQEMKKLSKLDVQNFIEFITSGGEDSSPECFNPSQSTQLFQLLSLVLDSIGLFSLEGALLENLTLYIDKQVEIAERNTELWNLIDTKGFQHGFASSTFDNGTSQKRALPTYTMEYLDI</sequence>
<name>UTP8_YEAST</name>
<proteinExistence type="evidence at protein level"/>
<gene>
    <name type="primary">UTP8</name>
    <name type="ordered locus">YGR128C</name>
</gene>
<feature type="chain" id="PRO_0000065743" description="U3 small nucleolar RNA-associated protein 8">
    <location>
        <begin position="1"/>
        <end position="713"/>
    </location>
</feature>
<feature type="modified residue" description="Phosphothreonine" evidence="7">
    <location>
        <position position="95"/>
    </location>
</feature>
<feature type="modified residue" description="Phosphoserine" evidence="6">
    <location>
        <position position="148"/>
    </location>
</feature>
<feature type="modified residue" description="Phosphoserine" evidence="7">
    <location>
        <position position="150"/>
    </location>
</feature>
<keyword id="KW-0002">3D-structure</keyword>
<keyword id="KW-0539">Nucleus</keyword>
<keyword id="KW-0597">Phosphoprotein</keyword>
<keyword id="KW-1185">Reference proteome</keyword>
<keyword id="KW-0687">Ribonucleoprotein</keyword>
<keyword id="KW-0690">Ribosome biogenesis</keyword>
<keyword id="KW-0698">rRNA processing</keyword>
<keyword id="KW-0804">Transcription</keyword>